<comment type="function">
    <text evidence="1">Involved in transcription antitermination. Required for transcription of ribosomal RNA (rRNA) genes. Binds specifically to the boxA antiterminator sequence of the ribosomal RNA (rrn) operons.</text>
</comment>
<comment type="similarity">
    <text evidence="1">Belongs to the NusB family.</text>
</comment>
<dbReference type="EMBL" id="CP000026">
    <property type="protein sequence ID" value="AAV78190.1"/>
    <property type="molecule type" value="Genomic_DNA"/>
</dbReference>
<dbReference type="RefSeq" id="WP_000801129.1">
    <property type="nucleotide sequence ID" value="NC_006511.1"/>
</dbReference>
<dbReference type="SMR" id="Q5PFS9"/>
<dbReference type="GeneID" id="89550189"/>
<dbReference type="KEGG" id="spt:SPA2305"/>
<dbReference type="HOGENOM" id="CLU_087843_4_1_6"/>
<dbReference type="Proteomes" id="UP000008185">
    <property type="component" value="Chromosome"/>
</dbReference>
<dbReference type="GO" id="GO:0005829">
    <property type="term" value="C:cytosol"/>
    <property type="evidence" value="ECO:0007669"/>
    <property type="project" value="TreeGrafter"/>
</dbReference>
<dbReference type="GO" id="GO:0003723">
    <property type="term" value="F:RNA binding"/>
    <property type="evidence" value="ECO:0007669"/>
    <property type="project" value="UniProtKB-UniRule"/>
</dbReference>
<dbReference type="GO" id="GO:0006353">
    <property type="term" value="P:DNA-templated transcription termination"/>
    <property type="evidence" value="ECO:0007669"/>
    <property type="project" value="UniProtKB-UniRule"/>
</dbReference>
<dbReference type="GO" id="GO:0031564">
    <property type="term" value="P:transcription antitermination"/>
    <property type="evidence" value="ECO:0007669"/>
    <property type="project" value="UniProtKB-KW"/>
</dbReference>
<dbReference type="CDD" id="cd00619">
    <property type="entry name" value="Terminator_NusB"/>
    <property type="match status" value="1"/>
</dbReference>
<dbReference type="FunFam" id="1.10.940.10:FF:000001">
    <property type="entry name" value="Transcription antitermination factor NusB"/>
    <property type="match status" value="1"/>
</dbReference>
<dbReference type="Gene3D" id="1.10.940.10">
    <property type="entry name" value="NusB-like"/>
    <property type="match status" value="1"/>
</dbReference>
<dbReference type="HAMAP" id="MF_00073">
    <property type="entry name" value="NusB"/>
    <property type="match status" value="1"/>
</dbReference>
<dbReference type="InterPro" id="IPR035926">
    <property type="entry name" value="NusB-like_sf"/>
</dbReference>
<dbReference type="InterPro" id="IPR011605">
    <property type="entry name" value="NusB_fam"/>
</dbReference>
<dbReference type="InterPro" id="IPR006027">
    <property type="entry name" value="NusB_RsmB_TIM44"/>
</dbReference>
<dbReference type="NCBIfam" id="TIGR01951">
    <property type="entry name" value="nusB"/>
    <property type="match status" value="1"/>
</dbReference>
<dbReference type="PANTHER" id="PTHR11078:SF3">
    <property type="entry name" value="ANTITERMINATION NUSB DOMAIN-CONTAINING PROTEIN"/>
    <property type="match status" value="1"/>
</dbReference>
<dbReference type="PANTHER" id="PTHR11078">
    <property type="entry name" value="N UTILIZATION SUBSTANCE PROTEIN B-RELATED"/>
    <property type="match status" value="1"/>
</dbReference>
<dbReference type="Pfam" id="PF01029">
    <property type="entry name" value="NusB"/>
    <property type="match status" value="1"/>
</dbReference>
<dbReference type="SUPFAM" id="SSF48013">
    <property type="entry name" value="NusB-like"/>
    <property type="match status" value="1"/>
</dbReference>
<sequence>MKPAARRRARECAVQALYSWQLSQNDIADVEYQFLAEQDVKDVDVLYFRELLSGVATNSAYLDGLMKPYLSRLLEELGQVEKAVLRIALFELSKRSDVPYKVAINEAIELAKTFGAEDSHKFVNGVLDKAAPVIRPNKK</sequence>
<organism>
    <name type="scientific">Salmonella paratyphi A (strain ATCC 9150 / SARB42)</name>
    <dbReference type="NCBI Taxonomy" id="295319"/>
    <lineage>
        <taxon>Bacteria</taxon>
        <taxon>Pseudomonadati</taxon>
        <taxon>Pseudomonadota</taxon>
        <taxon>Gammaproteobacteria</taxon>
        <taxon>Enterobacterales</taxon>
        <taxon>Enterobacteriaceae</taxon>
        <taxon>Salmonella</taxon>
    </lineage>
</organism>
<proteinExistence type="inferred from homology"/>
<name>NUSB_SALPA</name>
<gene>
    <name evidence="1" type="primary">nusB</name>
    <name type="ordered locus">SPA2305</name>
</gene>
<accession>Q5PFS9</accession>
<protein>
    <recommendedName>
        <fullName evidence="1">Transcription antitermination protein NusB</fullName>
    </recommendedName>
    <alternativeName>
        <fullName evidence="1">Antitermination factor NusB</fullName>
    </alternativeName>
</protein>
<evidence type="ECO:0000255" key="1">
    <source>
        <dbReference type="HAMAP-Rule" id="MF_00073"/>
    </source>
</evidence>
<feature type="chain" id="PRO_0000265587" description="Transcription antitermination protein NusB">
    <location>
        <begin position="1"/>
        <end position="139"/>
    </location>
</feature>
<reference key="1">
    <citation type="journal article" date="2004" name="Nat. Genet.">
        <title>Comparison of genome degradation in Paratyphi A and Typhi, human-restricted serovars of Salmonella enterica that cause typhoid.</title>
        <authorList>
            <person name="McClelland M."/>
            <person name="Sanderson K.E."/>
            <person name="Clifton S.W."/>
            <person name="Latreille P."/>
            <person name="Porwollik S."/>
            <person name="Sabo A."/>
            <person name="Meyer R."/>
            <person name="Bieri T."/>
            <person name="Ozersky P."/>
            <person name="McLellan M."/>
            <person name="Harkins C.R."/>
            <person name="Wang C."/>
            <person name="Nguyen C."/>
            <person name="Berghoff A."/>
            <person name="Elliott G."/>
            <person name="Kohlberg S."/>
            <person name="Strong C."/>
            <person name="Du F."/>
            <person name="Carter J."/>
            <person name="Kremizki C."/>
            <person name="Layman D."/>
            <person name="Leonard S."/>
            <person name="Sun H."/>
            <person name="Fulton L."/>
            <person name="Nash W."/>
            <person name="Miner T."/>
            <person name="Minx P."/>
            <person name="Delehaunty K."/>
            <person name="Fronick C."/>
            <person name="Magrini V."/>
            <person name="Nhan M."/>
            <person name="Warren W."/>
            <person name="Florea L."/>
            <person name="Spieth J."/>
            <person name="Wilson R.K."/>
        </authorList>
    </citation>
    <scope>NUCLEOTIDE SEQUENCE [LARGE SCALE GENOMIC DNA]</scope>
    <source>
        <strain>ATCC 9150 / SARB42</strain>
    </source>
</reference>
<keyword id="KW-0694">RNA-binding</keyword>
<keyword id="KW-0804">Transcription</keyword>
<keyword id="KW-0889">Transcription antitermination</keyword>
<keyword id="KW-0805">Transcription regulation</keyword>